<evidence type="ECO:0000255" key="1">
    <source>
        <dbReference type="HAMAP-Rule" id="MF_00087"/>
    </source>
</evidence>
<feature type="chain" id="PRO_1000093158" description="Glutamyl-tRNA reductase">
    <location>
        <begin position="1"/>
        <end position="435"/>
    </location>
</feature>
<feature type="active site" description="Nucleophile" evidence="1">
    <location>
        <position position="50"/>
    </location>
</feature>
<feature type="binding site" evidence="1">
    <location>
        <begin position="49"/>
        <end position="52"/>
    </location>
    <ligand>
        <name>substrate</name>
    </ligand>
</feature>
<feature type="binding site" evidence="1">
    <location>
        <position position="109"/>
    </location>
    <ligand>
        <name>substrate</name>
    </ligand>
</feature>
<feature type="binding site" evidence="1">
    <location>
        <begin position="114"/>
        <end position="116"/>
    </location>
    <ligand>
        <name>substrate</name>
    </ligand>
</feature>
<feature type="binding site" evidence="1">
    <location>
        <position position="120"/>
    </location>
    <ligand>
        <name>substrate</name>
    </ligand>
</feature>
<feature type="binding site" evidence="1">
    <location>
        <begin position="198"/>
        <end position="203"/>
    </location>
    <ligand>
        <name>NADP(+)</name>
        <dbReference type="ChEBI" id="CHEBI:58349"/>
    </ligand>
</feature>
<feature type="site" description="Important for activity" evidence="1">
    <location>
        <position position="99"/>
    </location>
</feature>
<organism>
    <name type="scientific">Prochlorococcus marinus (strain MIT 9211)</name>
    <dbReference type="NCBI Taxonomy" id="93059"/>
    <lineage>
        <taxon>Bacteria</taxon>
        <taxon>Bacillati</taxon>
        <taxon>Cyanobacteriota</taxon>
        <taxon>Cyanophyceae</taxon>
        <taxon>Synechococcales</taxon>
        <taxon>Prochlorococcaceae</taxon>
        <taxon>Prochlorococcus</taxon>
    </lineage>
</organism>
<gene>
    <name evidence="1" type="primary">hemA</name>
    <name type="ordered locus">P9211_09941</name>
</gene>
<comment type="function">
    <text evidence="1">Catalyzes the NADPH-dependent reduction of glutamyl-tRNA(Glu) to glutamate 1-semialdehyde (GSA).</text>
</comment>
<comment type="catalytic activity">
    <reaction evidence="1">
        <text>(S)-4-amino-5-oxopentanoate + tRNA(Glu) + NADP(+) = L-glutamyl-tRNA(Glu) + NADPH + H(+)</text>
        <dbReference type="Rhea" id="RHEA:12344"/>
        <dbReference type="Rhea" id="RHEA-COMP:9663"/>
        <dbReference type="Rhea" id="RHEA-COMP:9680"/>
        <dbReference type="ChEBI" id="CHEBI:15378"/>
        <dbReference type="ChEBI" id="CHEBI:57501"/>
        <dbReference type="ChEBI" id="CHEBI:57783"/>
        <dbReference type="ChEBI" id="CHEBI:58349"/>
        <dbReference type="ChEBI" id="CHEBI:78442"/>
        <dbReference type="ChEBI" id="CHEBI:78520"/>
        <dbReference type="EC" id="1.2.1.70"/>
    </reaction>
</comment>
<comment type="pathway">
    <text evidence="1">Porphyrin-containing compound metabolism; protoporphyrin-IX biosynthesis; 5-aminolevulinate from L-glutamyl-tRNA(Glu): step 1/2.</text>
</comment>
<comment type="pathway">
    <text evidence="1">Porphyrin-containing compound metabolism; chlorophyll biosynthesis.</text>
</comment>
<comment type="subunit">
    <text evidence="1">Homodimer.</text>
</comment>
<comment type="domain">
    <text evidence="1">Possesses an unusual extended V-shaped dimeric structure with each monomer consisting of three distinct domains arranged along a curved 'spinal' alpha-helix. The N-terminal catalytic domain specifically recognizes the glutamate moiety of the substrate. The second domain is the NADPH-binding domain, and the third C-terminal domain is responsible for dimerization.</text>
</comment>
<comment type="miscellaneous">
    <text evidence="1">During catalysis, the active site Cys acts as a nucleophile attacking the alpha-carbonyl group of tRNA-bound glutamate with the formation of a thioester intermediate between enzyme and glutamate, and the concomitant release of tRNA(Glu). The thioester intermediate is finally reduced by direct hydride transfer from NADPH, to form the product GSA.</text>
</comment>
<comment type="similarity">
    <text evidence="1">Belongs to the glutamyl-tRNA reductase family.</text>
</comment>
<keyword id="KW-0149">Chlorophyll biosynthesis</keyword>
<keyword id="KW-0521">NADP</keyword>
<keyword id="KW-0560">Oxidoreductase</keyword>
<keyword id="KW-0627">Porphyrin biosynthesis</keyword>
<keyword id="KW-1185">Reference proteome</keyword>
<protein>
    <recommendedName>
        <fullName evidence="1">Glutamyl-tRNA reductase</fullName>
        <shortName evidence="1">GluTR</shortName>
        <ecNumber evidence="1">1.2.1.70</ecNumber>
    </recommendedName>
</protein>
<proteinExistence type="inferred from homology"/>
<sequence length="435" mass="47959">MNIAVVGLSHRTAPVEVREKLSISDDNIPSAFNTLNTNDQIIEVSILSTCNRLEIYSFVKNSDNGVKAIKDFLCKHSGLGIDELDPHLFSYDQAEAVKHVMRVAGGLDSLVLGEGQILSQVKKMVRLGQENHSMGPILNRLLTQAVSTGKRVRSETNLGTGAVSISSAAVELAQLKLGQSEGKDELMSLEREKVSIVGAGRMSRLLIQHLQSKGCSKLKLINRTFQRAEALALDFPDVDIHCQLLDDLDESLRNSTLIFTSTAAENPIIDAARLKEVVRDETLRLIDIGVPRNISSDVKGLTGFEAHDVDDLQEVVSRNQEARQQIALEAEALVDEEGRIFLEWWASLEAVPTINLLRSSLESVRKEELQKALSRMGPDFSARERKVVEALSKGIINKILHTPVTNLRAPQTSSNRKISLEVIETLFELGVSESE</sequence>
<reference key="1">
    <citation type="journal article" date="2007" name="PLoS Genet.">
        <title>Patterns and implications of gene gain and loss in the evolution of Prochlorococcus.</title>
        <authorList>
            <person name="Kettler G.C."/>
            <person name="Martiny A.C."/>
            <person name="Huang K."/>
            <person name="Zucker J."/>
            <person name="Coleman M.L."/>
            <person name="Rodrigue S."/>
            <person name="Chen F."/>
            <person name="Lapidus A."/>
            <person name="Ferriera S."/>
            <person name="Johnson J."/>
            <person name="Steglich C."/>
            <person name="Church G.M."/>
            <person name="Richardson P."/>
            <person name="Chisholm S.W."/>
        </authorList>
    </citation>
    <scope>NUCLEOTIDE SEQUENCE [LARGE SCALE GENOMIC DNA]</scope>
    <source>
        <strain>MIT 9211</strain>
    </source>
</reference>
<accession>A9BAR3</accession>
<dbReference type="EC" id="1.2.1.70" evidence="1"/>
<dbReference type="EMBL" id="CP000878">
    <property type="protein sequence ID" value="ABX08925.1"/>
    <property type="molecule type" value="Genomic_DNA"/>
</dbReference>
<dbReference type="RefSeq" id="WP_012195546.1">
    <property type="nucleotide sequence ID" value="NC_009976.1"/>
</dbReference>
<dbReference type="SMR" id="A9BAR3"/>
<dbReference type="STRING" id="93059.P9211_09941"/>
<dbReference type="KEGG" id="pmj:P9211_09941"/>
<dbReference type="eggNOG" id="COG0373">
    <property type="taxonomic scope" value="Bacteria"/>
</dbReference>
<dbReference type="HOGENOM" id="CLU_035113_2_1_3"/>
<dbReference type="OrthoDB" id="110209at2"/>
<dbReference type="UniPathway" id="UPA00251">
    <property type="reaction ID" value="UER00316"/>
</dbReference>
<dbReference type="UniPathway" id="UPA00668"/>
<dbReference type="Proteomes" id="UP000000788">
    <property type="component" value="Chromosome"/>
</dbReference>
<dbReference type="GO" id="GO:0008883">
    <property type="term" value="F:glutamyl-tRNA reductase activity"/>
    <property type="evidence" value="ECO:0007669"/>
    <property type="project" value="UniProtKB-UniRule"/>
</dbReference>
<dbReference type="GO" id="GO:0050661">
    <property type="term" value="F:NADP binding"/>
    <property type="evidence" value="ECO:0007669"/>
    <property type="project" value="InterPro"/>
</dbReference>
<dbReference type="GO" id="GO:0015995">
    <property type="term" value="P:chlorophyll biosynthetic process"/>
    <property type="evidence" value="ECO:0007669"/>
    <property type="project" value="UniProtKB-UniRule"/>
</dbReference>
<dbReference type="GO" id="GO:0006782">
    <property type="term" value="P:protoporphyrinogen IX biosynthetic process"/>
    <property type="evidence" value="ECO:0007669"/>
    <property type="project" value="UniProtKB-UniRule"/>
</dbReference>
<dbReference type="CDD" id="cd05213">
    <property type="entry name" value="NAD_bind_Glutamyl_tRNA_reduct"/>
    <property type="match status" value="1"/>
</dbReference>
<dbReference type="FunFam" id="3.30.460.30:FF:000001">
    <property type="entry name" value="Glutamyl-tRNA reductase"/>
    <property type="match status" value="1"/>
</dbReference>
<dbReference type="FunFam" id="3.40.50.720:FF:000031">
    <property type="entry name" value="Glutamyl-tRNA reductase"/>
    <property type="match status" value="1"/>
</dbReference>
<dbReference type="Gene3D" id="3.30.460.30">
    <property type="entry name" value="Glutamyl-tRNA reductase, N-terminal domain"/>
    <property type="match status" value="1"/>
</dbReference>
<dbReference type="Gene3D" id="3.40.50.720">
    <property type="entry name" value="NAD(P)-binding Rossmann-like Domain"/>
    <property type="match status" value="1"/>
</dbReference>
<dbReference type="HAMAP" id="MF_00087">
    <property type="entry name" value="Glu_tRNA_reductase"/>
    <property type="match status" value="1"/>
</dbReference>
<dbReference type="InterPro" id="IPR000343">
    <property type="entry name" value="4pyrrol_synth_GluRdtase"/>
</dbReference>
<dbReference type="InterPro" id="IPR015896">
    <property type="entry name" value="4pyrrol_synth_GluRdtase_dimer"/>
</dbReference>
<dbReference type="InterPro" id="IPR015895">
    <property type="entry name" value="4pyrrol_synth_GluRdtase_N"/>
</dbReference>
<dbReference type="InterPro" id="IPR018214">
    <property type="entry name" value="GluRdtase_CS"/>
</dbReference>
<dbReference type="InterPro" id="IPR036453">
    <property type="entry name" value="GluRdtase_dimer_dom_sf"/>
</dbReference>
<dbReference type="InterPro" id="IPR036343">
    <property type="entry name" value="GluRdtase_N_sf"/>
</dbReference>
<dbReference type="InterPro" id="IPR036291">
    <property type="entry name" value="NAD(P)-bd_dom_sf"/>
</dbReference>
<dbReference type="InterPro" id="IPR006151">
    <property type="entry name" value="Shikm_DH/Glu-tRNA_Rdtase"/>
</dbReference>
<dbReference type="NCBIfam" id="TIGR01035">
    <property type="entry name" value="hemA"/>
    <property type="match status" value="1"/>
</dbReference>
<dbReference type="NCBIfam" id="NF000744">
    <property type="entry name" value="PRK00045.1-3"/>
    <property type="match status" value="1"/>
</dbReference>
<dbReference type="PANTHER" id="PTHR43120">
    <property type="entry name" value="GLUTAMYL-TRNA REDUCTASE 1, CHLOROPLASTIC"/>
    <property type="match status" value="1"/>
</dbReference>
<dbReference type="PANTHER" id="PTHR43120:SF1">
    <property type="entry name" value="GLUTAMYL-TRNA REDUCTASE 1, CHLOROPLASTIC"/>
    <property type="match status" value="1"/>
</dbReference>
<dbReference type="Pfam" id="PF00745">
    <property type="entry name" value="GlutR_dimer"/>
    <property type="match status" value="1"/>
</dbReference>
<dbReference type="Pfam" id="PF05201">
    <property type="entry name" value="GlutR_N"/>
    <property type="match status" value="1"/>
</dbReference>
<dbReference type="Pfam" id="PF01488">
    <property type="entry name" value="Shikimate_DH"/>
    <property type="match status" value="1"/>
</dbReference>
<dbReference type="PIRSF" id="PIRSF000445">
    <property type="entry name" value="4pyrrol_synth_GluRdtase"/>
    <property type="match status" value="1"/>
</dbReference>
<dbReference type="SUPFAM" id="SSF69742">
    <property type="entry name" value="Glutamyl tRNA-reductase catalytic, N-terminal domain"/>
    <property type="match status" value="1"/>
</dbReference>
<dbReference type="SUPFAM" id="SSF69075">
    <property type="entry name" value="Glutamyl tRNA-reductase dimerization domain"/>
    <property type="match status" value="1"/>
</dbReference>
<dbReference type="SUPFAM" id="SSF51735">
    <property type="entry name" value="NAD(P)-binding Rossmann-fold domains"/>
    <property type="match status" value="1"/>
</dbReference>
<dbReference type="PROSITE" id="PS00747">
    <property type="entry name" value="GLUTR"/>
    <property type="match status" value="1"/>
</dbReference>
<name>HEM1_PROM4</name>